<reference key="1">
    <citation type="journal article" date="2008" name="Chem. Biol. Interact.">
        <title>Extending the Bacillus cereus group genomics to putative food-borne pathogens of different toxicity.</title>
        <authorList>
            <person name="Lapidus A."/>
            <person name="Goltsman E."/>
            <person name="Auger S."/>
            <person name="Galleron N."/>
            <person name="Segurens B."/>
            <person name="Dossat C."/>
            <person name="Land M.L."/>
            <person name="Broussolle V."/>
            <person name="Brillard J."/>
            <person name="Guinebretiere M.-H."/>
            <person name="Sanchis V."/>
            <person name="Nguen-the C."/>
            <person name="Lereclus D."/>
            <person name="Richardson P."/>
            <person name="Wincker P."/>
            <person name="Weissenbach J."/>
            <person name="Ehrlich S.D."/>
            <person name="Sorokin A."/>
        </authorList>
    </citation>
    <scope>NUCLEOTIDE SEQUENCE [LARGE SCALE GENOMIC DNA]</scope>
    <source>
        <strain>DSM 22905 / CIP 110041 / 391-98 / NVH 391-98</strain>
    </source>
</reference>
<comment type="function">
    <text evidence="1">Attaches a formyl group to the free amino group of methionyl-tRNA(fMet). The formyl group appears to play a dual role in the initiator identity of N-formylmethionyl-tRNA by promoting its recognition by IF2 and preventing the misappropriation of this tRNA by the elongation apparatus.</text>
</comment>
<comment type="catalytic activity">
    <reaction evidence="1">
        <text>L-methionyl-tRNA(fMet) + (6R)-10-formyltetrahydrofolate = N-formyl-L-methionyl-tRNA(fMet) + (6S)-5,6,7,8-tetrahydrofolate + H(+)</text>
        <dbReference type="Rhea" id="RHEA:24380"/>
        <dbReference type="Rhea" id="RHEA-COMP:9952"/>
        <dbReference type="Rhea" id="RHEA-COMP:9953"/>
        <dbReference type="ChEBI" id="CHEBI:15378"/>
        <dbReference type="ChEBI" id="CHEBI:57453"/>
        <dbReference type="ChEBI" id="CHEBI:78530"/>
        <dbReference type="ChEBI" id="CHEBI:78844"/>
        <dbReference type="ChEBI" id="CHEBI:195366"/>
        <dbReference type="EC" id="2.1.2.9"/>
    </reaction>
</comment>
<comment type="similarity">
    <text evidence="1">Belongs to the Fmt family.</text>
</comment>
<name>FMT_BACCN</name>
<accession>A7GRJ6</accession>
<proteinExistence type="inferred from homology"/>
<keyword id="KW-0648">Protein biosynthesis</keyword>
<keyword id="KW-0808">Transferase</keyword>
<gene>
    <name evidence="1" type="primary">fmt</name>
    <name type="ordered locus">Bcer98_2518</name>
</gene>
<evidence type="ECO:0000255" key="1">
    <source>
        <dbReference type="HAMAP-Rule" id="MF_00182"/>
    </source>
</evidence>
<sequence>MIKVVFMGTPDFSVPVLRRLIEDGYDVVGVVTQPDRPVGRKKVMTPTPVKVEAEKHGIPVLQPLKIREQDEYEKVLALEPDLIVTAAFGQIIPKEILEAPKYGCINVHASLLPELRGGAPIHYAIMQGKEKTGITIMYMVEKLDAGDILTQVEVEIEERETTGSLFDKLSEAGAHLLSKTVPLLVQGKLEPIKQDEEKVTFAYNIKREQEKINWAKTGEEVYNHIRGLNPWPVAYTTLAGQVVKVWWGEKVPTANDAQPGTIVEIQEDGFIVVTGNETGIKITELQPAGKKRMSSSQFLRGAKLEIGMKLGEDA</sequence>
<feature type="chain" id="PRO_1000077287" description="Methionyl-tRNA formyltransferase">
    <location>
        <begin position="1"/>
        <end position="314"/>
    </location>
</feature>
<feature type="binding site" evidence="1">
    <location>
        <begin position="110"/>
        <end position="113"/>
    </location>
    <ligand>
        <name>(6S)-5,6,7,8-tetrahydrofolate</name>
        <dbReference type="ChEBI" id="CHEBI:57453"/>
    </ligand>
</feature>
<dbReference type="EC" id="2.1.2.9" evidence="1"/>
<dbReference type="EMBL" id="CP000764">
    <property type="protein sequence ID" value="ABS22754.1"/>
    <property type="molecule type" value="Genomic_DNA"/>
</dbReference>
<dbReference type="RefSeq" id="WP_012094961.1">
    <property type="nucleotide sequence ID" value="NC_009674.1"/>
</dbReference>
<dbReference type="SMR" id="A7GRJ6"/>
<dbReference type="STRING" id="315749.Bcer98_2518"/>
<dbReference type="GeneID" id="33897774"/>
<dbReference type="KEGG" id="bcy:Bcer98_2518"/>
<dbReference type="eggNOG" id="COG0223">
    <property type="taxonomic scope" value="Bacteria"/>
</dbReference>
<dbReference type="HOGENOM" id="CLU_033347_1_1_9"/>
<dbReference type="OrthoDB" id="9802815at2"/>
<dbReference type="Proteomes" id="UP000002300">
    <property type="component" value="Chromosome"/>
</dbReference>
<dbReference type="GO" id="GO:0005829">
    <property type="term" value="C:cytosol"/>
    <property type="evidence" value="ECO:0007669"/>
    <property type="project" value="TreeGrafter"/>
</dbReference>
<dbReference type="GO" id="GO:0004479">
    <property type="term" value="F:methionyl-tRNA formyltransferase activity"/>
    <property type="evidence" value="ECO:0007669"/>
    <property type="project" value="UniProtKB-UniRule"/>
</dbReference>
<dbReference type="CDD" id="cd08646">
    <property type="entry name" value="FMT_core_Met-tRNA-FMT_N"/>
    <property type="match status" value="1"/>
</dbReference>
<dbReference type="CDD" id="cd08704">
    <property type="entry name" value="Met_tRNA_FMT_C"/>
    <property type="match status" value="1"/>
</dbReference>
<dbReference type="FunFam" id="3.10.25.10:FF:000003">
    <property type="entry name" value="Methionyl-tRNA formyltransferase"/>
    <property type="match status" value="1"/>
</dbReference>
<dbReference type="FunFam" id="3.40.50.170:FF:000004">
    <property type="entry name" value="Methionyl-tRNA formyltransferase"/>
    <property type="match status" value="1"/>
</dbReference>
<dbReference type="Gene3D" id="3.10.25.10">
    <property type="entry name" value="Formyl transferase, C-terminal domain"/>
    <property type="match status" value="1"/>
</dbReference>
<dbReference type="Gene3D" id="3.40.50.170">
    <property type="entry name" value="Formyl transferase, N-terminal domain"/>
    <property type="match status" value="1"/>
</dbReference>
<dbReference type="HAMAP" id="MF_00182">
    <property type="entry name" value="Formyl_trans"/>
    <property type="match status" value="1"/>
</dbReference>
<dbReference type="InterPro" id="IPR005794">
    <property type="entry name" value="Fmt"/>
</dbReference>
<dbReference type="InterPro" id="IPR005793">
    <property type="entry name" value="Formyl_trans_C"/>
</dbReference>
<dbReference type="InterPro" id="IPR037022">
    <property type="entry name" value="Formyl_trans_C_sf"/>
</dbReference>
<dbReference type="InterPro" id="IPR002376">
    <property type="entry name" value="Formyl_transf_N"/>
</dbReference>
<dbReference type="InterPro" id="IPR036477">
    <property type="entry name" value="Formyl_transf_N_sf"/>
</dbReference>
<dbReference type="InterPro" id="IPR011034">
    <property type="entry name" value="Formyl_transferase-like_C_sf"/>
</dbReference>
<dbReference type="InterPro" id="IPR001555">
    <property type="entry name" value="GART_AS"/>
</dbReference>
<dbReference type="InterPro" id="IPR044135">
    <property type="entry name" value="Met-tRNA-FMT_C"/>
</dbReference>
<dbReference type="InterPro" id="IPR041711">
    <property type="entry name" value="Met-tRNA-FMT_N"/>
</dbReference>
<dbReference type="NCBIfam" id="TIGR00460">
    <property type="entry name" value="fmt"/>
    <property type="match status" value="1"/>
</dbReference>
<dbReference type="PANTHER" id="PTHR11138">
    <property type="entry name" value="METHIONYL-TRNA FORMYLTRANSFERASE"/>
    <property type="match status" value="1"/>
</dbReference>
<dbReference type="PANTHER" id="PTHR11138:SF5">
    <property type="entry name" value="METHIONYL-TRNA FORMYLTRANSFERASE, MITOCHONDRIAL"/>
    <property type="match status" value="1"/>
</dbReference>
<dbReference type="Pfam" id="PF02911">
    <property type="entry name" value="Formyl_trans_C"/>
    <property type="match status" value="1"/>
</dbReference>
<dbReference type="Pfam" id="PF00551">
    <property type="entry name" value="Formyl_trans_N"/>
    <property type="match status" value="1"/>
</dbReference>
<dbReference type="SUPFAM" id="SSF50486">
    <property type="entry name" value="FMT C-terminal domain-like"/>
    <property type="match status" value="1"/>
</dbReference>
<dbReference type="SUPFAM" id="SSF53328">
    <property type="entry name" value="Formyltransferase"/>
    <property type="match status" value="1"/>
</dbReference>
<dbReference type="PROSITE" id="PS00373">
    <property type="entry name" value="GART"/>
    <property type="match status" value="1"/>
</dbReference>
<organism>
    <name type="scientific">Bacillus cytotoxicus (strain DSM 22905 / CIP 110041 / 391-98 / NVH 391-98)</name>
    <dbReference type="NCBI Taxonomy" id="315749"/>
    <lineage>
        <taxon>Bacteria</taxon>
        <taxon>Bacillati</taxon>
        <taxon>Bacillota</taxon>
        <taxon>Bacilli</taxon>
        <taxon>Bacillales</taxon>
        <taxon>Bacillaceae</taxon>
        <taxon>Bacillus</taxon>
        <taxon>Bacillus cereus group</taxon>
    </lineage>
</organism>
<protein>
    <recommendedName>
        <fullName evidence="1">Methionyl-tRNA formyltransferase</fullName>
        <ecNumber evidence="1">2.1.2.9</ecNumber>
    </recommendedName>
</protein>